<feature type="chain" id="PRO_1000145293" description="ATP synthase subunit a">
    <location>
        <begin position="1"/>
        <end position="276"/>
    </location>
</feature>
<feature type="transmembrane region" description="Helical" evidence="1">
    <location>
        <begin position="49"/>
        <end position="69"/>
    </location>
</feature>
<feature type="transmembrane region" description="Helical" evidence="1">
    <location>
        <begin position="109"/>
        <end position="129"/>
    </location>
</feature>
<feature type="transmembrane region" description="Helical" evidence="1">
    <location>
        <begin position="137"/>
        <end position="157"/>
    </location>
</feature>
<feature type="transmembrane region" description="Helical" evidence="1">
    <location>
        <begin position="173"/>
        <end position="193"/>
    </location>
</feature>
<feature type="transmembrane region" description="Helical" evidence="1">
    <location>
        <begin position="203"/>
        <end position="223"/>
    </location>
</feature>
<feature type="transmembrane region" description="Helical" evidence="1">
    <location>
        <begin position="232"/>
        <end position="252"/>
    </location>
</feature>
<feature type="transmembrane region" description="Helical" evidence="1">
    <location>
        <begin position="253"/>
        <end position="273"/>
    </location>
</feature>
<evidence type="ECO:0000255" key="1">
    <source>
        <dbReference type="HAMAP-Rule" id="MF_01393"/>
    </source>
</evidence>
<protein>
    <recommendedName>
        <fullName evidence="1">ATP synthase subunit a</fullName>
    </recommendedName>
    <alternativeName>
        <fullName evidence="1">ATP synthase F0 sector subunit a</fullName>
    </alternativeName>
    <alternativeName>
        <fullName evidence="1">F-ATPase subunit 6</fullName>
    </alternativeName>
</protein>
<dbReference type="EMBL" id="CP000509">
    <property type="protein sequence ID" value="ABL81270.1"/>
    <property type="molecule type" value="Genomic_DNA"/>
</dbReference>
<dbReference type="SMR" id="A1SHI5"/>
<dbReference type="STRING" id="196162.Noca_1757"/>
<dbReference type="KEGG" id="nca:Noca_1757"/>
<dbReference type="eggNOG" id="COG0356">
    <property type="taxonomic scope" value="Bacteria"/>
</dbReference>
<dbReference type="HOGENOM" id="CLU_041018_0_1_11"/>
<dbReference type="OrthoDB" id="9809130at2"/>
<dbReference type="Proteomes" id="UP000000640">
    <property type="component" value="Chromosome"/>
</dbReference>
<dbReference type="GO" id="GO:0005886">
    <property type="term" value="C:plasma membrane"/>
    <property type="evidence" value="ECO:0007669"/>
    <property type="project" value="UniProtKB-SubCell"/>
</dbReference>
<dbReference type="GO" id="GO:0045259">
    <property type="term" value="C:proton-transporting ATP synthase complex"/>
    <property type="evidence" value="ECO:0007669"/>
    <property type="project" value="UniProtKB-KW"/>
</dbReference>
<dbReference type="GO" id="GO:0046933">
    <property type="term" value="F:proton-transporting ATP synthase activity, rotational mechanism"/>
    <property type="evidence" value="ECO:0007669"/>
    <property type="project" value="UniProtKB-UniRule"/>
</dbReference>
<dbReference type="CDD" id="cd00310">
    <property type="entry name" value="ATP-synt_Fo_a_6"/>
    <property type="match status" value="1"/>
</dbReference>
<dbReference type="Gene3D" id="1.20.120.220">
    <property type="entry name" value="ATP synthase, F0 complex, subunit A"/>
    <property type="match status" value="1"/>
</dbReference>
<dbReference type="HAMAP" id="MF_01393">
    <property type="entry name" value="ATP_synth_a_bact"/>
    <property type="match status" value="1"/>
</dbReference>
<dbReference type="InterPro" id="IPR000568">
    <property type="entry name" value="ATP_synth_F0_asu"/>
</dbReference>
<dbReference type="InterPro" id="IPR023011">
    <property type="entry name" value="ATP_synth_F0_asu_AS"/>
</dbReference>
<dbReference type="InterPro" id="IPR045083">
    <property type="entry name" value="ATP_synth_F0_asu_bact/mt"/>
</dbReference>
<dbReference type="InterPro" id="IPR035908">
    <property type="entry name" value="F0_ATP_A_sf"/>
</dbReference>
<dbReference type="NCBIfam" id="TIGR01131">
    <property type="entry name" value="ATP_synt_6_or_A"/>
    <property type="match status" value="1"/>
</dbReference>
<dbReference type="PANTHER" id="PTHR11410">
    <property type="entry name" value="ATP SYNTHASE SUBUNIT A"/>
    <property type="match status" value="1"/>
</dbReference>
<dbReference type="PANTHER" id="PTHR11410:SF0">
    <property type="entry name" value="ATP SYNTHASE SUBUNIT A"/>
    <property type="match status" value="1"/>
</dbReference>
<dbReference type="Pfam" id="PF00119">
    <property type="entry name" value="ATP-synt_A"/>
    <property type="match status" value="1"/>
</dbReference>
<dbReference type="PRINTS" id="PR00123">
    <property type="entry name" value="ATPASEA"/>
</dbReference>
<dbReference type="SUPFAM" id="SSF81336">
    <property type="entry name" value="F1F0 ATP synthase subunit A"/>
    <property type="match status" value="1"/>
</dbReference>
<dbReference type="PROSITE" id="PS00449">
    <property type="entry name" value="ATPASE_A"/>
    <property type="match status" value="1"/>
</dbReference>
<gene>
    <name evidence="1" type="primary">atpB</name>
    <name type="ordered locus">Noca_1757</name>
</gene>
<keyword id="KW-0066">ATP synthesis</keyword>
<keyword id="KW-1003">Cell membrane</keyword>
<keyword id="KW-0138">CF(0)</keyword>
<keyword id="KW-0375">Hydrogen ion transport</keyword>
<keyword id="KW-0406">Ion transport</keyword>
<keyword id="KW-0472">Membrane</keyword>
<keyword id="KW-1185">Reference proteome</keyword>
<keyword id="KW-0812">Transmembrane</keyword>
<keyword id="KW-1133">Transmembrane helix</keyword>
<keyword id="KW-0813">Transport</keyword>
<comment type="function">
    <text evidence="1">Key component of the proton channel; it plays a direct role in the translocation of protons across the membrane.</text>
</comment>
<comment type="subunit">
    <text evidence="1">F-type ATPases have 2 components, CF(1) - the catalytic core - and CF(0) - the membrane proton channel. CF(1) has five subunits: alpha(3), beta(3), gamma(1), delta(1), epsilon(1). CF(0) has three main subunits: a(1), b(2) and c(9-12). The alpha and beta chains form an alternating ring which encloses part of the gamma chain. CF(1) is attached to CF(0) by a central stalk formed by the gamma and epsilon chains, while a peripheral stalk is formed by the delta and b chains.</text>
</comment>
<comment type="subcellular location">
    <subcellularLocation>
        <location evidence="1">Cell membrane</location>
        <topology evidence="1">Multi-pass membrane protein</topology>
    </subcellularLocation>
</comment>
<comment type="similarity">
    <text evidence="1">Belongs to the ATPase A chain family.</text>
</comment>
<organism>
    <name type="scientific">Nocardioides sp. (strain ATCC BAA-499 / JS614)</name>
    <dbReference type="NCBI Taxonomy" id="196162"/>
    <lineage>
        <taxon>Bacteria</taxon>
        <taxon>Bacillati</taxon>
        <taxon>Actinomycetota</taxon>
        <taxon>Actinomycetes</taxon>
        <taxon>Propionibacteriales</taxon>
        <taxon>Nocardioidaceae</taxon>
        <taxon>Nocardioides</taxon>
    </lineage>
</organism>
<reference key="1">
    <citation type="submission" date="2006-12" db="EMBL/GenBank/DDBJ databases">
        <title>Complete sequence of chromosome 1 of Nocardioides sp. JS614.</title>
        <authorList>
            <person name="Copeland A."/>
            <person name="Lucas S."/>
            <person name="Lapidus A."/>
            <person name="Barry K."/>
            <person name="Detter J.C."/>
            <person name="Glavina del Rio T."/>
            <person name="Hammon N."/>
            <person name="Israni S."/>
            <person name="Dalin E."/>
            <person name="Tice H."/>
            <person name="Pitluck S."/>
            <person name="Thompson L.S."/>
            <person name="Brettin T."/>
            <person name="Bruce D."/>
            <person name="Han C."/>
            <person name="Tapia R."/>
            <person name="Schmutz J."/>
            <person name="Larimer F."/>
            <person name="Land M."/>
            <person name="Hauser L."/>
            <person name="Kyrpides N."/>
            <person name="Kim E."/>
            <person name="Mattes T."/>
            <person name="Gossett J."/>
            <person name="Richardson P."/>
        </authorList>
    </citation>
    <scope>NUCLEOTIDE SEQUENCE [LARGE SCALE GENOMIC DNA]</scope>
    <source>
        <strain>ATCC BAA-499 / JS614</strain>
    </source>
</reference>
<proteinExistence type="inferred from homology"/>
<name>ATP6_NOCSJ</name>
<accession>A1SHI5</accession>
<sequence length="276" mass="30349">MTFAASVVRTAEGDGFTPPGPHDFDLPAIGGGHDTFEMFGQSFVLGVTKPMLQLVLAAIVLFVFFFAAARKRAMVPSRLQFVGEGFYGFVRNSLGRDIIGHDFAKFVPYLFTLFFFILLNNAFGSIPFIEFPTFSRSGMVYGLAVLSWVIYNAAGISKHGFVGYLKLQTVPGGIRGPILALLIPLEFMSNILVRPVTLALRLFANMFAGHLLLILFALGGEYILTEMSVQYAPVGILAWLMFVAVAFLEMLIQFLQAYVFVLLNAMYISGAVADEH</sequence>